<comment type="function">
    <text evidence="2">Potassium channel blocker. At 3 uM, this toxin blocks voltage-independently voltage-gated potassium channels rKv1.2/KCNA2 (25%), hKv1.3/KCNA3 (27%), rKv4.2/KCND2 (25%), Kv10.1/KCNH1/EAG1 (15%), Kv11/hERG (12%), and Shaker-IR (10%). On hKv1.3/KCNA3, the IC(50) is 17.1 +-3.3 uM.</text>
</comment>
<comment type="subcellular location">
    <subcellularLocation>
        <location evidence="1 2">Secreted</location>
    </subcellularLocation>
</comment>
<comment type="tissue specificity">
    <text evidence="5">Expressed by the venom gland.</text>
</comment>
<comment type="domain">
    <text evidence="7">The presence of a 'disulfide through disulfide knot' structurally defines this protein as a knottin.</text>
</comment>
<comment type="domain">
    <text evidence="7">Is completely devoid of the classical secondary structure elements (alpha-helix and/or beta-strand).</text>
</comment>
<comment type="mass spectrometry"/>
<comment type="mass spectrometry"/>
<comment type="miscellaneous">
    <text evidence="2">Negative results: does not block all sodium channels tested and several potassium channels. Does not block the following voltage-gated potassium channels: rKv1.1/KCNA1, rKv1.1/KCNA1, rKv1.5/KCNA5, rKv1.6/KCNA6, rKv2.1/KCNB1, hKv3.1/KCNC1, and Kv7.2/KCNQ2. Does not block the following voltage-gated sodium channels: rNav1.1/SCN1A, rNav1.4/SCN4A, hNav1.5/SCN5A, mNav1.6/SCN8A, and DmNav1/para.</text>
</comment>
<comment type="similarity">
    <text evidence="5">Belongs to the short scorpion toxin superfamily. Potassium channel inhibitor family. Epsilon-KTx 01 subfamily.</text>
</comment>
<comment type="sequence caution" evidence="5">
    <conflict type="erroneous initiation">
        <sequence resource="EMBL-CDS" id="JAW06973"/>
    </conflict>
    <text>Truncated N-terminus.</text>
</comment>
<organism>
    <name type="scientific">Tityus serrulatus</name>
    <name type="common">Brazilian scorpion</name>
    <dbReference type="NCBI Taxonomy" id="6887"/>
    <lineage>
        <taxon>Eukaryota</taxon>
        <taxon>Metazoa</taxon>
        <taxon>Ecdysozoa</taxon>
        <taxon>Arthropoda</taxon>
        <taxon>Chelicerata</taxon>
        <taxon>Arachnida</taxon>
        <taxon>Scorpiones</taxon>
        <taxon>Buthida</taxon>
        <taxon>Buthoidea</taxon>
        <taxon>Buthidae</taxon>
        <taxon>Tityus</taxon>
    </lineage>
</organism>
<proteinExistence type="evidence at protein level"/>
<dbReference type="EMBL" id="GEUW01000035">
    <property type="protein sequence ID" value="JAW07010.1"/>
    <property type="molecule type" value="mRNA"/>
</dbReference>
<dbReference type="EMBL" id="GEUW01000072">
    <property type="protein sequence ID" value="JAW06973.1"/>
    <property type="status" value="ALT_INIT"/>
    <property type="molecule type" value="mRNA"/>
</dbReference>
<dbReference type="EMBL" id="MT450713">
    <property type="protein sequence ID" value="QPD99049.1"/>
    <property type="molecule type" value="mRNA"/>
</dbReference>
<dbReference type="PDB" id="2MSF">
    <property type="method" value="NMR"/>
    <property type="chains" value="A=31-59"/>
</dbReference>
<dbReference type="PDBsum" id="2MSF"/>
<dbReference type="BMRB" id="P0C174"/>
<dbReference type="SMR" id="P0C174"/>
<dbReference type="EvolutionaryTrace" id="P0C174"/>
<dbReference type="GO" id="GO:0005576">
    <property type="term" value="C:extracellular region"/>
    <property type="evidence" value="ECO:0007669"/>
    <property type="project" value="UniProtKB-SubCell"/>
</dbReference>
<dbReference type="GO" id="GO:0015459">
    <property type="term" value="F:potassium channel regulator activity"/>
    <property type="evidence" value="ECO:0007669"/>
    <property type="project" value="UniProtKB-KW"/>
</dbReference>
<dbReference type="GO" id="GO:0090729">
    <property type="term" value="F:toxin activity"/>
    <property type="evidence" value="ECO:0007669"/>
    <property type="project" value="UniProtKB-KW"/>
</dbReference>
<dbReference type="InterPro" id="IPR036574">
    <property type="entry name" value="Scorpion_toxin-like_sf"/>
</dbReference>
<dbReference type="SUPFAM" id="SSF57095">
    <property type="entry name" value="Scorpion toxin-like"/>
    <property type="match status" value="1"/>
</dbReference>
<name>KEX11_TITSE</name>
<evidence type="ECO:0000269" key="1">
    <source>
    </source>
</evidence>
<evidence type="ECO:0000269" key="2">
    <source>
    </source>
</evidence>
<evidence type="ECO:0000303" key="3">
    <source>
    </source>
</evidence>
<evidence type="ECO:0000303" key="4">
    <source>
    </source>
</evidence>
<evidence type="ECO:0000305" key="5"/>
<evidence type="ECO:0000305" key="6">
    <source>
    </source>
</evidence>
<evidence type="ECO:0000305" key="7">
    <source>
    </source>
</evidence>
<evidence type="ECO:0000312" key="8">
    <source>
        <dbReference type="EMBL" id="JAW06973.1"/>
    </source>
</evidence>
<evidence type="ECO:0000312" key="9">
    <source>
        <dbReference type="EMBL" id="JAW07010.1"/>
    </source>
</evidence>
<evidence type="ECO:0000312" key="10">
    <source>
        <dbReference type="EMBL" id="QPD99049.1"/>
    </source>
</evidence>
<evidence type="ECO:0007744" key="11">
    <source>
        <dbReference type="PDB" id="2MSF"/>
    </source>
</evidence>
<evidence type="ECO:0007829" key="12">
    <source>
        <dbReference type="PDB" id="2MSF"/>
    </source>
</evidence>
<reference evidence="8 9" key="1">
    <citation type="journal article" date="2018" name="PLoS ONE">
        <title>Proteomic endorsed transcriptomic profiles of venom glands from Tityus obscurus and T. serrulatus scorpions.</title>
        <authorList>
            <person name="de Oliveira U.C."/>
            <person name="Nishiyama M.Y. Jr."/>
            <person name="Dos Santos M.B.V."/>
            <person name="Santos-da-Silva A.P."/>
            <person name="Chalkidis H.M."/>
            <person name="Souza-Imberg A."/>
            <person name="Candido D.M."/>
            <person name="Yamanouye N."/>
            <person name="Dorce V.A.C."/>
            <person name="Junqueira-de-Azevedo I.L.M."/>
        </authorList>
    </citation>
    <scope>NUCLEOTIDE SEQUENCE [MRNA]</scope>
    <source>
        <tissue>Telson</tissue>
    </source>
</reference>
<reference evidence="10" key="2">
    <citation type="journal article" date="2021" name="Toxicon">
        <title>Novel components of Tityus serrulatus venom: a transcriptomic approach.</title>
        <authorList>
            <person name="Kalapothakis Y."/>
            <person name="Miranda K."/>
            <person name="Pereira A.H."/>
            <person name="Witt A.S.A."/>
            <person name="Marani C."/>
            <person name="Martins A.P."/>
            <person name="Leal H.G."/>
            <person name="Campos-Junior E."/>
            <person name="Pimenta A.M.C."/>
            <person name="Borges A."/>
            <person name="Chavez-Olortegui C."/>
            <person name="Kalapothakis E."/>
        </authorList>
    </citation>
    <scope>NUCLEOTIDE SEQUENCE [MRNA]</scope>
    <source>
        <tissue>Telson</tissue>
    </source>
</reference>
<reference key="3">
    <citation type="journal article" date="2003" name="Biochem. Biophys. Res. Commun.">
        <title>Novel structural class of four disulfide-bridged peptides from Tityus serrulatus venom.</title>
        <authorList>
            <person name="Pimenta A.M.C."/>
            <person name="Legros C."/>
            <person name="Almeida F.M."/>
            <person name="Mansuelle P."/>
            <person name="De Lima M.E."/>
            <person name="Bougis P.E."/>
            <person name="Martin-Eauclaire M.-F."/>
        </authorList>
    </citation>
    <scope>PROTEIN SEQUENCE OF 31-59</scope>
    <scope>MASS SPECTROMETRY</scope>
    <scope>SUBCELLULAR LOCATION</scope>
    <source>
        <tissue>Venom</tissue>
    </source>
</reference>
<reference key="4">
    <citation type="journal article" date="2016" name="Toxins">
        <title>Structural and functional elucidation of peptide Ts11 shows evidence of a novel subfamily of scorpion venom toxins.</title>
        <authorList>
            <person name="Cremonez C.M."/>
            <person name="Maiti M."/>
            <person name="Peigneur S."/>
            <person name="Cassoli J.S."/>
            <person name="Dutra A.A."/>
            <person name="Waelkens E."/>
            <person name="Lescrinier E."/>
            <person name="Herdewijn P."/>
            <person name="de Lima M.E."/>
            <person name="Pimenta A.M."/>
            <person name="Arantes E.C."/>
            <person name="Tytgat J."/>
        </authorList>
    </citation>
    <scope>PARTIAL PROTEIN SEQUENCE</scope>
    <scope>FUNCTION</scope>
    <scope>STRUCTURE BY NMR OF 31-59</scope>
    <scope>DISULFIDE BOND</scope>
    <scope>MASS SPECTROMETRY</scope>
    <scope>NOMENCLATURE</scope>
    <source>
        <tissue>Venom</tissue>
    </source>
</reference>
<reference key="5">
    <citation type="journal article" date="2009" name="Protein Pept. Lett.">
        <title>Tityus serrulatus scorpion venom and toxins: an overview.</title>
        <authorList>
            <person name="Cologna C.T."/>
            <person name="Marcussi S."/>
            <person name="Giglio J.R."/>
            <person name="Soares A.M."/>
            <person name="Arantes E.C."/>
        </authorList>
    </citation>
    <scope>NOMENCLATURE</scope>
</reference>
<keyword id="KW-0002">3D-structure</keyword>
<keyword id="KW-0903">Direct protein sequencing</keyword>
<keyword id="KW-1015">Disulfide bond</keyword>
<keyword id="KW-0872">Ion channel impairing toxin</keyword>
<keyword id="KW-0960">Knottin</keyword>
<keyword id="KW-0632">Potassium channel impairing toxin</keyword>
<keyword id="KW-0964">Secreted</keyword>
<keyword id="KW-0732">Signal</keyword>
<keyword id="KW-0800">Toxin</keyword>
<keyword id="KW-1220">Voltage-gated potassium channel impairing toxin</keyword>
<protein>
    <recommendedName>
        <fullName evidence="4">Potassium channel toxin epsilon-KTx 1.1</fullName>
    </recommendedName>
    <alternativeName>
        <fullName evidence="5">Tityustoxin-11</fullName>
        <shortName evidence="3 4">Ts11</shortName>
    </alternativeName>
    <alternativeName>
        <fullName evidence="4">TsPep1</fullName>
    </alternativeName>
</protein>
<accession>P0C174</accession>
<accession>A0A218QX37</accession>
<accession>A0A218QX98</accession>
<sequence>MKLSCGFLLILLVLSAMIATFSEVEAMKPSKPKCGLCRYRCCSGGCSSGKCVNGACDCSGRSDLNDELEKYQ</sequence>
<feature type="signal peptide" evidence="6 7">
    <location>
        <begin position="1"/>
        <end position="30"/>
    </location>
</feature>
<feature type="peptide" id="PRO_0000227819" description="Potassium channel toxin epsilon-KTx 1.1" evidence="1 2">
    <location>
        <begin position="31"/>
        <end position="59"/>
    </location>
</feature>
<feature type="propeptide" id="PRO_0000455731" evidence="6 7">
    <location>
        <begin position="60"/>
        <end position="72"/>
    </location>
</feature>
<feature type="disulfide bond" evidence="2 11">
    <location>
        <begin position="34"/>
        <end position="42"/>
    </location>
</feature>
<feature type="disulfide bond" evidence="2 11">
    <location>
        <begin position="37"/>
        <end position="58"/>
    </location>
</feature>
<feature type="disulfide bond" evidence="2 11">
    <location>
        <begin position="41"/>
        <end position="51"/>
    </location>
</feature>
<feature type="disulfide bond" evidence="2 11">
    <location>
        <begin position="46"/>
        <end position="56"/>
    </location>
</feature>
<feature type="strand" evidence="12">
    <location>
        <begin position="35"/>
        <end position="39"/>
    </location>
</feature>
<feature type="strand" evidence="12">
    <location>
        <begin position="42"/>
        <end position="44"/>
    </location>
</feature>
<feature type="strand" evidence="12">
    <location>
        <begin position="47"/>
        <end position="49"/>
    </location>
</feature>
<feature type="strand" evidence="12">
    <location>
        <begin position="53"/>
        <end position="56"/>
    </location>
</feature>